<proteinExistence type="inferred from homology"/>
<name>AAEA_ECO24</name>
<evidence type="ECO:0000255" key="1">
    <source>
        <dbReference type="HAMAP-Rule" id="MF_01544"/>
    </source>
</evidence>
<reference key="1">
    <citation type="journal article" date="2008" name="J. Bacteriol.">
        <title>The pangenome structure of Escherichia coli: comparative genomic analysis of E. coli commensal and pathogenic isolates.</title>
        <authorList>
            <person name="Rasko D.A."/>
            <person name="Rosovitz M.J."/>
            <person name="Myers G.S.A."/>
            <person name="Mongodin E.F."/>
            <person name="Fricke W.F."/>
            <person name="Gajer P."/>
            <person name="Crabtree J."/>
            <person name="Sebaihia M."/>
            <person name="Thomson N.R."/>
            <person name="Chaudhuri R."/>
            <person name="Henderson I.R."/>
            <person name="Sperandio V."/>
            <person name="Ravel J."/>
        </authorList>
    </citation>
    <scope>NUCLEOTIDE SEQUENCE [LARGE SCALE GENOMIC DNA]</scope>
    <source>
        <strain>E24377A / ETEC</strain>
    </source>
</reference>
<protein>
    <recommendedName>
        <fullName evidence="1">p-hydroxybenzoic acid efflux pump subunit AaeA</fullName>
        <shortName evidence="1">pHBA efflux pump protein A</shortName>
    </recommendedName>
</protein>
<organism>
    <name type="scientific">Escherichia coli O139:H28 (strain E24377A / ETEC)</name>
    <dbReference type="NCBI Taxonomy" id="331111"/>
    <lineage>
        <taxon>Bacteria</taxon>
        <taxon>Pseudomonadati</taxon>
        <taxon>Pseudomonadota</taxon>
        <taxon>Gammaproteobacteria</taxon>
        <taxon>Enterobacterales</taxon>
        <taxon>Enterobacteriaceae</taxon>
        <taxon>Escherichia</taxon>
    </lineage>
</organism>
<sequence length="310" mass="34775">MKTLIRKFSRTAITVVLVILAFIAIFNAWVYYTESPWTRDARFSADVVAIAPDVSGLITQVNVHDNQLVKKGQILFTIDQPRYQKALEEAQADVAYYQVLAQEKRQEAGRRNRLGVQAMSREEIDQANNVLQTVLHQLAKAQATRDLAKLDLERTVIRAPADGWVTNLNVYTGEFITRGSTAVALVKQNSFYVLAYMEETKLEGVRPGYRAEITPLGSNKVLKGTVDSVAAGVTNASSTRDDKGMATIDSNLEWVRLAQRVPVRIRLDNQQENIWPAGTTATVVVTGKQDRDESQDSFFRKMAHRLREFG</sequence>
<accession>A7ZSD5</accession>
<dbReference type="EMBL" id="CP000800">
    <property type="protein sequence ID" value="ABV16975.1"/>
    <property type="molecule type" value="Genomic_DNA"/>
</dbReference>
<dbReference type="RefSeq" id="WP_000854021.1">
    <property type="nucleotide sequence ID" value="NC_009801.1"/>
</dbReference>
<dbReference type="SMR" id="A7ZSD5"/>
<dbReference type="GeneID" id="75206091"/>
<dbReference type="KEGG" id="ecw:EcE24377A_3724"/>
<dbReference type="HOGENOM" id="CLU_018816_15_2_6"/>
<dbReference type="Proteomes" id="UP000001122">
    <property type="component" value="Chromosome"/>
</dbReference>
<dbReference type="GO" id="GO:0005886">
    <property type="term" value="C:plasma membrane"/>
    <property type="evidence" value="ECO:0007669"/>
    <property type="project" value="UniProtKB-SubCell"/>
</dbReference>
<dbReference type="GO" id="GO:0022857">
    <property type="term" value="F:transmembrane transporter activity"/>
    <property type="evidence" value="ECO:0007669"/>
    <property type="project" value="UniProtKB-UniRule"/>
</dbReference>
<dbReference type="FunFam" id="2.40.30.170:FF:000002">
    <property type="entry name" value="p-hydroxybenzoic acid efflux pump subunit AaeA"/>
    <property type="match status" value="1"/>
</dbReference>
<dbReference type="FunFam" id="2.40.50.100:FF:000018">
    <property type="entry name" value="p-hydroxybenzoic acid efflux pump subunit AaeA"/>
    <property type="match status" value="1"/>
</dbReference>
<dbReference type="Gene3D" id="2.40.30.170">
    <property type="match status" value="1"/>
</dbReference>
<dbReference type="Gene3D" id="2.40.50.100">
    <property type="match status" value="1"/>
</dbReference>
<dbReference type="HAMAP" id="MF_01544">
    <property type="entry name" value="AaeA"/>
    <property type="match status" value="1"/>
</dbReference>
<dbReference type="InterPro" id="IPR043602">
    <property type="entry name" value="CusB-like_dom_1"/>
</dbReference>
<dbReference type="InterPro" id="IPR032317">
    <property type="entry name" value="CusB_D23"/>
</dbReference>
<dbReference type="InterPro" id="IPR050393">
    <property type="entry name" value="MFP_Efflux_Pump"/>
</dbReference>
<dbReference type="InterPro" id="IPR022871">
    <property type="entry name" value="PHBA_efflux_pump_AaeA"/>
</dbReference>
<dbReference type="InterPro" id="IPR006143">
    <property type="entry name" value="RND_pump_MFP"/>
</dbReference>
<dbReference type="NCBIfam" id="NF007850">
    <property type="entry name" value="PRK10559.1"/>
    <property type="match status" value="1"/>
</dbReference>
<dbReference type="NCBIfam" id="TIGR01730">
    <property type="entry name" value="RND_mfp"/>
    <property type="match status" value="1"/>
</dbReference>
<dbReference type="PANTHER" id="PTHR30367:SF12">
    <property type="entry name" value="P-HYDROXYBENZOIC ACID EFFLUX PUMP SUBUNIT AAEA"/>
    <property type="match status" value="1"/>
</dbReference>
<dbReference type="PANTHER" id="PTHR30367">
    <property type="entry name" value="P-HYDROXYBENZOIC ACID EFFLUX PUMP SUBUNIT AAEA-RELATED"/>
    <property type="match status" value="1"/>
</dbReference>
<dbReference type="Pfam" id="PF00529">
    <property type="entry name" value="CusB_dom_1"/>
    <property type="match status" value="1"/>
</dbReference>
<dbReference type="Pfam" id="PF16576">
    <property type="entry name" value="HlyD_D23"/>
    <property type="match status" value="1"/>
</dbReference>
<dbReference type="SUPFAM" id="SSF111369">
    <property type="entry name" value="HlyD-like secretion proteins"/>
    <property type="match status" value="1"/>
</dbReference>
<gene>
    <name evidence="1" type="primary">aaeA</name>
    <name type="ordered locus">EcE24377A_3724</name>
</gene>
<feature type="chain" id="PRO_1000068802" description="p-hydroxybenzoic acid efflux pump subunit AaeA">
    <location>
        <begin position="1"/>
        <end position="310"/>
    </location>
</feature>
<feature type="transmembrane region" description="Helical" evidence="1">
    <location>
        <begin position="12"/>
        <end position="32"/>
    </location>
</feature>
<keyword id="KW-0997">Cell inner membrane</keyword>
<keyword id="KW-1003">Cell membrane</keyword>
<keyword id="KW-0472">Membrane</keyword>
<keyword id="KW-1185">Reference proteome</keyword>
<keyword id="KW-0812">Transmembrane</keyword>
<keyword id="KW-1133">Transmembrane helix</keyword>
<keyword id="KW-0813">Transport</keyword>
<comment type="function">
    <text evidence="1">Forms an efflux pump with AaeB.</text>
</comment>
<comment type="subcellular location">
    <subcellularLocation>
        <location evidence="1">Cell inner membrane</location>
        <topology evidence="1">Single-pass membrane protein</topology>
    </subcellularLocation>
</comment>
<comment type="induction">
    <text evidence="1">Positively coregulated with aaeB and aaeX by AaeR.</text>
</comment>
<comment type="similarity">
    <text evidence="1">Belongs to the membrane fusion protein (MFP) (TC 8.A.1) family.</text>
</comment>